<comment type="function">
    <text evidence="3">Part of the receptor for interleukin 6. Binds to IL6 with low affinity, but does not transduce a signal. Signal activation necessitate an association with IL6ST. Activation leads to the regulation of the immune response, acute-phase reactions and hematopoiesis. The interaction with membrane-bound IL6R and IL6ST stimulates 'classic signaling', the restricted expression of the IL6R limits classic IL6 signaling to only a few tissues such as the liver and some cells of the immune system. Whereas the binding of IL6 and soluble IL6R to IL6ST stimulates 'trans-signaling'. Alternatively, 'cluster signaling' occurs when membrane-bound IL6:IL6R complexes on transmitter cells activate IL6ST receptors on neighboring receiver cells.</text>
</comment>
<comment type="function">
    <molecule>Interleukin-6 receptor subunit alpha</molecule>
    <text evidence="3">Signaling via the membrane-bound IL6R is mostly regenerative and anti-inflammatory. Drives naive CD4(+) T cells to the Th17 lineage, through 'cluster signaling' by dendritic cells.</text>
</comment>
<comment type="function">
    <molecule>Soluble interleukin-6 receptor subunit alpha</molecule>
    <text evidence="2 3">Soluble form of IL6 receptor (sIL6R) that acts as an agonist of IL6 activity (By similarity). The IL6:sIL6R complex (hyper-IL6) binds to IL6ST/gp130 on cell surfaces and induces signaling also on cells that do not express membrane-bound IL6R in a process called IL6 'trans-signaling'. sIL6R is causative for the pro-inflammatory properties of IL6 and an important player in the development of chronic inflammatory diseases. In complex with IL6, is required for induction of VEGF production (By similarity). Plays a protective role during liver injury, being required for maintenance of tissue regeneration. 'Trans-signaling' in central nervous system regulates energy and glucose homeostasis (By similarity).</text>
</comment>
<comment type="activity regulation">
    <text evidence="2">Classic and trans-signaling are both inhibited by tocilizumab, a humanized monoclonal antibody that blocks interleukin IL6R signaling.</text>
</comment>
<comment type="subunit">
    <text evidence="3">Component of a hexamer of two molecules each of IL6, IL6R and IL6ST; first binds to IL6 to associate with the signaling subunit IL6ST. Interacts (via N-terminal ectodomain) with SORL1; this interaction may affect IL6-binding to IL6R, hence decrease IL6 'classic-signaling'.</text>
</comment>
<comment type="subunit">
    <molecule>Soluble interleukin-6 receptor subunit alpha</molecule>
    <text evidence="2">Also interacts with SORL1; this interaction leads to soluble IL6R internalization. May form a trimeric complex with the soluble SORL1 ectodomain and circulating IL6 receptor; this interaction might stabilize circulating IL6, hence promote IL6 'trans-signaling'.</text>
</comment>
<comment type="subcellular location">
    <molecule>Interleukin-6 receptor subunit alpha</molecule>
    <subcellularLocation>
        <location evidence="3">Cell membrane</location>
        <topology evidence="4">Single-pass type I membrane protein</topology>
    </subcellularLocation>
</comment>
<comment type="subcellular location">
    <molecule>Soluble interleukin-6 receptor subunit alpha</molecule>
    <subcellularLocation>
        <location evidence="3">Secreted</location>
    </subcellularLocation>
</comment>
<comment type="tissue specificity">
    <text>Expressed in liver.</text>
</comment>
<comment type="domain">
    <text>The two fibronectin type-III-like domains contained in the C-terminal part form together a cytokine-binding domain.</text>
</comment>
<comment type="domain">
    <text>The WSXWS motif appears to be necessary for proper protein folding and thereby efficient intracellular transport and cell-surface receptor binding.</text>
</comment>
<comment type="PTM">
    <text evidence="3">A short soluble form is also released from the membrane by proteolysis. The sIL6R is formed by limited proteolysis of membrane-bound receptors, a process referred to as ectodomain shedding. mIL6R is cleaved by the proteases ADAM10 and ADAM17.</text>
</comment>
<comment type="PTM">
    <text evidence="2">Glycosylated. Glycosylation is dispensable for transport, signaling, and cell-surface turnover. Glycosylation at Asn-55 is a protease-regulatory exosite. Glycosylation is required for ADAM17-mediated proteolysis.</text>
</comment>
<comment type="similarity">
    <text evidence="8">Belongs to the type I cytokine receptor family. Type 3 subfamily.</text>
</comment>
<keyword id="KW-1003">Cell membrane</keyword>
<keyword id="KW-1015">Disulfide bond</keyword>
<keyword id="KW-0325">Glycoprotein</keyword>
<keyword id="KW-0393">Immunoglobulin domain</keyword>
<keyword id="KW-0472">Membrane</keyword>
<keyword id="KW-0675">Receptor</keyword>
<keyword id="KW-1185">Reference proteome</keyword>
<keyword id="KW-0677">Repeat</keyword>
<keyword id="KW-0964">Secreted</keyword>
<keyword id="KW-0732">Signal</keyword>
<keyword id="KW-0812">Transmembrane</keyword>
<keyword id="KW-1133">Transmembrane helix</keyword>
<name>IL6RA_PIG</name>
<reference key="1">
    <citation type="submission" date="1999-05" db="EMBL/GenBank/DDBJ databases">
        <title>Cloning and expression of biologically active porcine IL-6 receptor alpha chain.</title>
        <authorList>
            <person name="Morris K.R."/>
            <person name="Strom A.D.G."/>
        </authorList>
    </citation>
    <scope>NUCLEOTIDE SEQUENCE [MRNA]</scope>
</reference>
<reference key="2">
    <citation type="submission" date="1997-07" db="EMBL/GenBank/DDBJ databases">
        <title>Partial cDNA sequence of porcine interleukin 6 receptor.</title>
        <authorList>
            <person name="Klir J.J."/>
            <person name="Matteri R.L."/>
        </authorList>
    </citation>
    <scope>NUCLEOTIDE SEQUENCE [MRNA] OF 123-186</scope>
    <source>
        <tissue>Liver</tissue>
    </source>
</reference>
<accession>O18796</accession>
<gene>
    <name type="primary">IL6R</name>
</gene>
<proteinExistence type="evidence at transcript level"/>
<evidence type="ECO:0000250" key="1"/>
<evidence type="ECO:0000250" key="2">
    <source>
        <dbReference type="UniProtKB" id="P08887"/>
    </source>
</evidence>
<evidence type="ECO:0000250" key="3">
    <source>
        <dbReference type="UniProtKB" id="P22272"/>
    </source>
</evidence>
<evidence type="ECO:0000255" key="4"/>
<evidence type="ECO:0000255" key="5">
    <source>
        <dbReference type="PROSITE-ProRule" id="PRU00114"/>
    </source>
</evidence>
<evidence type="ECO:0000255" key="6">
    <source>
        <dbReference type="PROSITE-ProRule" id="PRU00316"/>
    </source>
</evidence>
<evidence type="ECO:0000256" key="7">
    <source>
        <dbReference type="SAM" id="MobiDB-lite"/>
    </source>
</evidence>
<evidence type="ECO:0000305" key="8"/>
<feature type="signal peptide" evidence="1">
    <location>
        <begin position="1"/>
        <end position="19"/>
    </location>
</feature>
<feature type="chain" id="PRO_0000010897" description="Interleukin-6 receptor subunit alpha">
    <location>
        <begin position="20"/>
        <end position="467"/>
    </location>
</feature>
<feature type="chain" id="PRO_0000450732" description="Soluble interleukin-6 receptor subunit alpha" evidence="2">
    <location>
        <begin position="20"/>
        <end position="355"/>
    </location>
</feature>
<feature type="topological domain" description="Extracellular" evidence="4">
    <location>
        <begin position="20"/>
        <end position="365"/>
    </location>
</feature>
<feature type="transmembrane region" description="Helical" evidence="4">
    <location>
        <begin position="366"/>
        <end position="386"/>
    </location>
</feature>
<feature type="topological domain" description="Cytoplasmic" evidence="4">
    <location>
        <begin position="387"/>
        <end position="467"/>
    </location>
</feature>
<feature type="domain" description="Ig-like C2-type">
    <location>
        <begin position="20"/>
        <end position="112"/>
    </location>
</feature>
<feature type="domain" description="Fibronectin type-III 1" evidence="6">
    <location>
        <begin position="113"/>
        <end position="217"/>
    </location>
</feature>
<feature type="domain" description="Fibronectin type-III 2" evidence="6">
    <location>
        <begin position="218"/>
        <end position="316"/>
    </location>
</feature>
<feature type="region of interest" description="Disordered" evidence="7">
    <location>
        <begin position="315"/>
        <end position="357"/>
    </location>
</feature>
<feature type="region of interest" description="Disordered" evidence="7">
    <location>
        <begin position="428"/>
        <end position="467"/>
    </location>
</feature>
<feature type="short sequence motif" description="WSXWS motif">
    <location>
        <begin position="303"/>
        <end position="307"/>
    </location>
</feature>
<feature type="compositionally biased region" description="Polar residues" evidence="7">
    <location>
        <begin position="317"/>
        <end position="336"/>
    </location>
</feature>
<feature type="compositionally biased region" description="Polar residues" evidence="7">
    <location>
        <begin position="346"/>
        <end position="357"/>
    </location>
</feature>
<feature type="site" description="Cleavage; by ADAM10 and ADAM17" evidence="2">
    <location>
        <begin position="355"/>
        <end position="356"/>
    </location>
</feature>
<feature type="glycosylation site" description="N-linked (GlcNAc...) asparagine" evidence="2">
    <location>
        <position position="55"/>
    </location>
</feature>
<feature type="glycosylation site" description="N-linked (GlcNAc...) asparagine" evidence="2">
    <location>
        <position position="93"/>
    </location>
</feature>
<feature type="glycosylation site" description="N-linked (GlcNAc...) asparagine" evidence="2">
    <location>
        <position position="221"/>
    </location>
</feature>
<feature type="glycosylation site" description="N-linked (GlcNAc...) asparagine" evidence="2">
    <location>
        <position position="245"/>
    </location>
</feature>
<feature type="glycosylation site" description="N-linked (GlcNAc...) asparagine" evidence="2">
    <location>
        <position position="350"/>
    </location>
</feature>
<feature type="glycosylation site" description="O-linked (GlcNAc) threonine" evidence="2">
    <location>
        <position position="352"/>
    </location>
</feature>
<feature type="disulfide bond" evidence="5">
    <location>
        <begin position="25"/>
        <end position="193"/>
    </location>
</feature>
<feature type="disulfide bond" evidence="5">
    <location>
        <begin position="47"/>
        <end position="96"/>
    </location>
</feature>
<feature type="disulfide bond" evidence="5">
    <location>
        <begin position="121"/>
        <end position="132"/>
    </location>
</feature>
<feature type="disulfide bond" evidence="5">
    <location>
        <begin position="165"/>
        <end position="176"/>
    </location>
</feature>
<sequence>MLAVGCALLTALLAAPGMALAPRGCSKLEVAQDVLTSLPGASVTLTCPGGEPGDNATIHWVLRNQVTGSPDGRPAGVGRRLLLKSVQLSDSGNYSCYQDGVPAGSVRLLVDAPPEEPQLSCFRKSPLSNVGCEWRPRSPPSPTTKAVLLVRKFQNSPVEDFQEPCQYSLEAQRFFCQLAVPEGDNSFHIVTLCVANSAGSQSSTPQTFEGYGILQPDPPVNITVSAVDRNPRWLSVTWQDPPSWNSYFYRLQFELRYRAERSKTFTTWMVKELQHHCIIHDAWSGMRHVVQLRAQEEFGHGLWSEWSQEVTGIPWTESRSSPAETELPLSTQAPTTNEDDEDISSKESANATSLPVQDSASVPLPTFLVAGGSLAFGTLLCIGIILRFKKTGQLQALKEGKTNMHPPYSLGQLVPERPKSTPVLVPLISPPVSPNSLGDNTSRNSRPEARGPQSPYDVSNRDYFFPR</sequence>
<protein>
    <recommendedName>
        <fullName>Interleukin-6 receptor subunit alpha</fullName>
        <shortName>IL-6 receptor subunit alpha</shortName>
        <shortName>IL-6R subunit alpha</shortName>
        <shortName>IL-6R-alpha</shortName>
        <shortName>IL-6RA</shortName>
    </recommendedName>
    <alternativeName>
        <fullName>IL-6R 1</fullName>
    </alternativeName>
    <cdAntigenName>CD126</cdAntigenName>
    <component>
        <recommendedName>
            <fullName evidence="8">Soluble interleukin-6 receptor subunit alpha</fullName>
            <shortName evidence="8">sIL6R</shortName>
        </recommendedName>
    </component>
</protein>
<dbReference type="EMBL" id="AF147881">
    <property type="protein sequence ID" value="AAF73109.1"/>
    <property type="molecule type" value="mRNA"/>
</dbReference>
<dbReference type="EMBL" id="AF015116">
    <property type="protein sequence ID" value="AAB70916.1"/>
    <property type="molecule type" value="mRNA"/>
</dbReference>
<dbReference type="RefSeq" id="NP_999568.1">
    <property type="nucleotide sequence ID" value="NM_214403.1"/>
</dbReference>
<dbReference type="SMR" id="O18796"/>
<dbReference type="FunCoup" id="O18796">
    <property type="interactions" value="245"/>
</dbReference>
<dbReference type="STRING" id="9823.ENSSSCP00000068722"/>
<dbReference type="GlyCosmos" id="O18796">
    <property type="glycosylation" value="6 sites, No reported glycans"/>
</dbReference>
<dbReference type="GlyGen" id="O18796">
    <property type="glycosylation" value="6 sites"/>
</dbReference>
<dbReference type="PaxDb" id="9823-ENSSSCP00000006981"/>
<dbReference type="GeneID" id="399522"/>
<dbReference type="KEGG" id="ssc:399522"/>
<dbReference type="CTD" id="3570"/>
<dbReference type="InParanoid" id="O18796"/>
<dbReference type="OrthoDB" id="8634471at2759"/>
<dbReference type="ChiTaRS" id="IL6R">
    <property type="organism name" value="pig"/>
</dbReference>
<dbReference type="Proteomes" id="UP000008227">
    <property type="component" value="Unplaced"/>
</dbReference>
<dbReference type="Proteomes" id="UP000314985">
    <property type="component" value="Unplaced"/>
</dbReference>
<dbReference type="Proteomes" id="UP000694570">
    <property type="component" value="Unplaced"/>
</dbReference>
<dbReference type="Proteomes" id="UP000694571">
    <property type="component" value="Unplaced"/>
</dbReference>
<dbReference type="Proteomes" id="UP000694720">
    <property type="component" value="Unplaced"/>
</dbReference>
<dbReference type="Proteomes" id="UP000694722">
    <property type="component" value="Unplaced"/>
</dbReference>
<dbReference type="Proteomes" id="UP000694723">
    <property type="component" value="Unplaced"/>
</dbReference>
<dbReference type="Proteomes" id="UP000694724">
    <property type="component" value="Unplaced"/>
</dbReference>
<dbReference type="Proteomes" id="UP000694725">
    <property type="component" value="Unplaced"/>
</dbReference>
<dbReference type="Proteomes" id="UP000694726">
    <property type="component" value="Unplaced"/>
</dbReference>
<dbReference type="Proteomes" id="UP000694727">
    <property type="component" value="Unplaced"/>
</dbReference>
<dbReference type="Proteomes" id="UP000694728">
    <property type="component" value="Unplaced"/>
</dbReference>
<dbReference type="GO" id="GO:0009897">
    <property type="term" value="C:external side of plasma membrane"/>
    <property type="evidence" value="ECO:0000318"/>
    <property type="project" value="GO_Central"/>
</dbReference>
<dbReference type="GO" id="GO:0005576">
    <property type="term" value="C:extracellular region"/>
    <property type="evidence" value="ECO:0007669"/>
    <property type="project" value="UniProtKB-SubCell"/>
</dbReference>
<dbReference type="GO" id="GO:0005896">
    <property type="term" value="C:interleukin-6 receptor complex"/>
    <property type="evidence" value="ECO:0000250"/>
    <property type="project" value="UniProtKB"/>
</dbReference>
<dbReference type="GO" id="GO:0043235">
    <property type="term" value="C:receptor complex"/>
    <property type="evidence" value="ECO:0000318"/>
    <property type="project" value="GO_Central"/>
</dbReference>
<dbReference type="GO" id="GO:0019970">
    <property type="term" value="F:interleukin-11 binding"/>
    <property type="evidence" value="ECO:0000318"/>
    <property type="project" value="GO_Central"/>
</dbReference>
<dbReference type="GO" id="GO:0004921">
    <property type="term" value="F:interleukin-11 receptor activity"/>
    <property type="evidence" value="ECO:0000318"/>
    <property type="project" value="GO_Central"/>
</dbReference>
<dbReference type="GO" id="GO:0019981">
    <property type="term" value="F:interleukin-6 binding"/>
    <property type="evidence" value="ECO:0000318"/>
    <property type="project" value="GO_Central"/>
</dbReference>
<dbReference type="GO" id="GO:0004915">
    <property type="term" value="F:interleukin-6 receptor activity"/>
    <property type="evidence" value="ECO:0000250"/>
    <property type="project" value="UniProtKB"/>
</dbReference>
<dbReference type="GO" id="GO:0070102">
    <property type="term" value="P:interleukin-6-mediated signaling pathway"/>
    <property type="evidence" value="ECO:0000250"/>
    <property type="project" value="UniProtKB"/>
</dbReference>
<dbReference type="GO" id="GO:0008284">
    <property type="term" value="P:positive regulation of cell population proliferation"/>
    <property type="evidence" value="ECO:0000318"/>
    <property type="project" value="GO_Central"/>
</dbReference>
<dbReference type="GO" id="GO:0072540">
    <property type="term" value="P:T-helper 17 cell lineage commitment"/>
    <property type="evidence" value="ECO:0000250"/>
    <property type="project" value="UniProtKB"/>
</dbReference>
<dbReference type="GO" id="GO:0010573">
    <property type="term" value="P:vascular endothelial growth factor production"/>
    <property type="evidence" value="ECO:0000250"/>
    <property type="project" value="UniProtKB"/>
</dbReference>
<dbReference type="CDD" id="cd00063">
    <property type="entry name" value="FN3"/>
    <property type="match status" value="1"/>
</dbReference>
<dbReference type="CDD" id="cd20939">
    <property type="entry name" value="IgC2_D1_IL-6RA"/>
    <property type="match status" value="1"/>
</dbReference>
<dbReference type="FunFam" id="2.60.40.10:FF:000136">
    <property type="entry name" value="Ciliary neurotrophic factor receptor alpha"/>
    <property type="match status" value="1"/>
</dbReference>
<dbReference type="FunFam" id="2.60.40.10:FF:001045">
    <property type="entry name" value="Interleukin 6 receptor"/>
    <property type="match status" value="1"/>
</dbReference>
<dbReference type="FunFam" id="2.60.40.10:FF:000886">
    <property type="entry name" value="Interleukin-6 receptor subunit alpha"/>
    <property type="match status" value="1"/>
</dbReference>
<dbReference type="Gene3D" id="2.60.40.10">
    <property type="entry name" value="Immunoglobulins"/>
    <property type="match status" value="3"/>
</dbReference>
<dbReference type="InterPro" id="IPR003961">
    <property type="entry name" value="FN3_dom"/>
</dbReference>
<dbReference type="InterPro" id="IPR036116">
    <property type="entry name" value="FN3_sf"/>
</dbReference>
<dbReference type="InterPro" id="IPR003530">
    <property type="entry name" value="Hematopoietin_rcpt_L_F3_CS"/>
</dbReference>
<dbReference type="InterPro" id="IPR007110">
    <property type="entry name" value="Ig-like_dom"/>
</dbReference>
<dbReference type="InterPro" id="IPR036179">
    <property type="entry name" value="Ig-like_dom_sf"/>
</dbReference>
<dbReference type="InterPro" id="IPR013783">
    <property type="entry name" value="Ig-like_fold"/>
</dbReference>
<dbReference type="InterPro" id="IPR003599">
    <property type="entry name" value="Ig_sub"/>
</dbReference>
<dbReference type="InterPro" id="IPR003598">
    <property type="entry name" value="Ig_sub2"/>
</dbReference>
<dbReference type="InterPro" id="IPR013151">
    <property type="entry name" value="Immunoglobulin_dom"/>
</dbReference>
<dbReference type="InterPro" id="IPR050379">
    <property type="entry name" value="Type-I_Cytokine_Rcpt"/>
</dbReference>
<dbReference type="InterPro" id="IPR015321">
    <property type="entry name" value="TypeI_recpt_CBD"/>
</dbReference>
<dbReference type="PANTHER" id="PTHR23036">
    <property type="entry name" value="CYTOKINE RECEPTOR"/>
    <property type="match status" value="1"/>
</dbReference>
<dbReference type="PANTHER" id="PTHR23036:SF98">
    <property type="entry name" value="INTERLEUKIN-6 RECEPTOR SUBUNIT ALPHA"/>
    <property type="match status" value="1"/>
</dbReference>
<dbReference type="Pfam" id="PF00047">
    <property type="entry name" value="ig"/>
    <property type="match status" value="1"/>
</dbReference>
<dbReference type="Pfam" id="PF09240">
    <property type="entry name" value="IL6Ra-bind"/>
    <property type="match status" value="1"/>
</dbReference>
<dbReference type="SMART" id="SM00060">
    <property type="entry name" value="FN3"/>
    <property type="match status" value="1"/>
</dbReference>
<dbReference type="SMART" id="SM00409">
    <property type="entry name" value="IG"/>
    <property type="match status" value="1"/>
</dbReference>
<dbReference type="SMART" id="SM00408">
    <property type="entry name" value="IGc2"/>
    <property type="match status" value="1"/>
</dbReference>
<dbReference type="SUPFAM" id="SSF49265">
    <property type="entry name" value="Fibronectin type III"/>
    <property type="match status" value="2"/>
</dbReference>
<dbReference type="SUPFAM" id="SSF48726">
    <property type="entry name" value="Immunoglobulin"/>
    <property type="match status" value="1"/>
</dbReference>
<dbReference type="PROSITE" id="PS50853">
    <property type="entry name" value="FN3"/>
    <property type="match status" value="2"/>
</dbReference>
<dbReference type="PROSITE" id="PS01354">
    <property type="entry name" value="HEMATOPO_REC_L_F3"/>
    <property type="match status" value="1"/>
</dbReference>
<dbReference type="PROSITE" id="PS50835">
    <property type="entry name" value="IG_LIKE"/>
    <property type="match status" value="1"/>
</dbReference>
<organism>
    <name type="scientific">Sus scrofa</name>
    <name type="common">Pig</name>
    <dbReference type="NCBI Taxonomy" id="9823"/>
    <lineage>
        <taxon>Eukaryota</taxon>
        <taxon>Metazoa</taxon>
        <taxon>Chordata</taxon>
        <taxon>Craniata</taxon>
        <taxon>Vertebrata</taxon>
        <taxon>Euteleostomi</taxon>
        <taxon>Mammalia</taxon>
        <taxon>Eutheria</taxon>
        <taxon>Laurasiatheria</taxon>
        <taxon>Artiodactyla</taxon>
        <taxon>Suina</taxon>
        <taxon>Suidae</taxon>
        <taxon>Sus</taxon>
    </lineage>
</organism>